<reference evidence="8" key="1">
    <citation type="journal article" date="2018" name="J. Proteome Res.">
        <title>Deciphering the Molecular Diversity of an Ant Venom Peptidome through a Venomics Approach.</title>
        <authorList>
            <person name="Touchard A."/>
            <person name="Tene N."/>
            <person name="Song P.C.T."/>
            <person name="Lefranc B."/>
            <person name="Leprince J."/>
            <person name="Treilhou M."/>
            <person name="Bonnafe E."/>
        </authorList>
    </citation>
    <scope>NUCLEOTIDE SEQUENCE [MRNA]</scope>
    <scope>MASS SPECTROMETRY</scope>
    <scope>SUBCELLULAR LOCATION</scope>
    <source>
        <tissue>Venom</tissue>
        <tissue>Venom gland</tissue>
    </source>
</reference>
<reference key="2">
    <citation type="journal article" date="2023" name="Toxins">
        <title>Discovery of an insect neuroactive helix ring peptide from ant venom.</title>
        <authorList>
            <person name="Barasse V."/>
            <person name="Jouvensal L."/>
            <person name="Boy G."/>
            <person name="Billet A."/>
            <person name="Ascoet S."/>
            <person name="Lefranc B."/>
            <person name="Leprince J."/>
            <person name="Dejean A."/>
            <person name="Lacotte V."/>
            <person name="Rahioui I."/>
            <person name="Sivignon C."/>
            <person name="Gaget K."/>
            <person name="Ribeiro Lopes M."/>
            <person name="Calevro F."/>
            <person name="Da Silva P."/>
            <person name="Loth K."/>
            <person name="Paquet F."/>
            <person name="Treilhou M."/>
            <person name="Bonnafe E."/>
            <person name="Touchard A."/>
        </authorList>
    </citation>
    <scope>FUNCTION</scope>
    <scope>BIOASSAY</scope>
    <scope>SYNTHESIS OF 37-72</scope>
</reference>
<name>TX10A_TETBN</name>
<accession>A0A6M3Z4D9</accession>
<evidence type="ECO:0000255" key="1"/>
<evidence type="ECO:0000269" key="2">
    <source>
    </source>
</evidence>
<evidence type="ECO:0000269" key="3">
    <source>
    </source>
</evidence>
<evidence type="ECO:0000303" key="4">
    <source>
    </source>
</evidence>
<evidence type="ECO:0000303" key="5">
    <source>
    </source>
</evidence>
<evidence type="ECO:0000305" key="6"/>
<evidence type="ECO:0000305" key="7">
    <source>
    </source>
</evidence>
<evidence type="ECO:0000312" key="8">
    <source>
        <dbReference type="EMBL" id="QJP03494.1"/>
    </source>
</evidence>
<comment type="function">
    <molecule>U10-myrmicitoxin-Tb1a</molecule>
    <text evidence="3">In vivo, this neurotoxin paralyzes about 40% of blowflies (L.caesar) one hour after intrathoracic injection, when tested at high doses (28 nmol/g).</text>
</comment>
<comment type="subcellular location">
    <subcellularLocation>
        <location evidence="2">Secreted</location>
    </subcellularLocation>
</comment>
<comment type="tissue specificity">
    <text evidence="7">Expressed by the venom gland.</text>
</comment>
<comment type="mass spectrometry">
    <molecule>U10-myrmicitoxin-Tb1a</molecule>
</comment>
<comment type="mass spectrometry">
    <molecule>U10-myrmicitoxin-Tb1a (cleaved)</molecule>
</comment>
<comment type="similarity">
    <text evidence="6">Belongs to the formicidae venom precursor-01 superfamily.</text>
</comment>
<dbReference type="EMBL" id="MN397947">
    <property type="protein sequence ID" value="QJP03494.1"/>
    <property type="molecule type" value="mRNA"/>
</dbReference>
<dbReference type="GO" id="GO:0005576">
    <property type="term" value="C:extracellular region"/>
    <property type="evidence" value="ECO:0000314"/>
    <property type="project" value="UniProtKB"/>
</dbReference>
<dbReference type="GO" id="GO:0090729">
    <property type="term" value="F:toxin activity"/>
    <property type="evidence" value="ECO:0007669"/>
    <property type="project" value="UniProtKB-KW"/>
</dbReference>
<dbReference type="InterPro" id="IPR049518">
    <property type="entry name" value="Pilosulin"/>
</dbReference>
<dbReference type="Pfam" id="PF17499">
    <property type="entry name" value="Pilosulin"/>
    <property type="match status" value="1"/>
</dbReference>
<proteinExistence type="evidence at protein level"/>
<keyword id="KW-0528">Neurotoxin</keyword>
<keyword id="KW-0964">Secreted</keyword>
<keyword id="KW-0732">Signal</keyword>
<keyword id="KW-0800">Toxin</keyword>
<organism>
    <name type="scientific">Tetramorium bicarinatum</name>
    <name type="common">Tramp ant</name>
    <dbReference type="NCBI Taxonomy" id="219812"/>
    <lineage>
        <taxon>Eukaryota</taxon>
        <taxon>Metazoa</taxon>
        <taxon>Ecdysozoa</taxon>
        <taxon>Arthropoda</taxon>
        <taxon>Hexapoda</taxon>
        <taxon>Insecta</taxon>
        <taxon>Pterygota</taxon>
        <taxon>Neoptera</taxon>
        <taxon>Endopterygota</taxon>
        <taxon>Hymenoptera</taxon>
        <taxon>Apocrita</taxon>
        <taxon>Aculeata</taxon>
        <taxon>Formicoidea</taxon>
        <taxon>Formicidae</taxon>
        <taxon>Myrmicinae</taxon>
        <taxon>Tetramorium</taxon>
    </lineage>
</organism>
<feature type="signal peptide" evidence="1">
    <location>
        <begin position="1"/>
        <end position="26"/>
    </location>
</feature>
<feature type="propeptide" id="PRO_0000459808" evidence="6">
    <location>
        <begin position="27"/>
        <end position="36"/>
    </location>
</feature>
<feature type="chain" id="PRO_5027023418" description="U10-myrmicitoxin-Tb1a" evidence="2">
    <location>
        <begin position="37"/>
        <end position="72"/>
    </location>
</feature>
<feature type="peptide" id="PRO_0000459809" description="U10-myrmicitoxin-Tb1a (cleaved)" evidence="2">
    <location>
        <begin position="52"/>
        <end position="72"/>
    </location>
</feature>
<sequence>MRVSYLSLTLTIVVVIAIIYAPETEAKAWADADAEAGLGFLAKIMGKVGMRMIKKLVPEAAKVAVDQLSQQQ</sequence>
<protein>
    <recommendedName>
        <fullName evidence="4 5">U10-myrmicitoxin-Tb1a</fullName>
        <shortName evidence="4 5">U10-MYRTX-Tb1a</shortName>
    </recommendedName>
    <component>
        <recommendedName>
            <fullName evidence="4">U10-myrmicitoxin-Tb1a (cleaved)</fullName>
            <shortName evidence="4">Cleaved U10-MYRTX-Tb1a (cleaved)</shortName>
        </recommendedName>
    </component>
</protein>